<dbReference type="EC" id="3.6.1.27" evidence="1"/>
<dbReference type="EMBL" id="CP001230">
    <property type="protein sequence ID" value="ACO04552.1"/>
    <property type="molecule type" value="Genomic_DNA"/>
</dbReference>
<dbReference type="RefSeq" id="WP_012676789.1">
    <property type="nucleotide sequence ID" value="NC_012440.1"/>
</dbReference>
<dbReference type="SMR" id="C0QU08"/>
<dbReference type="STRING" id="123214.PERMA_0381"/>
<dbReference type="PaxDb" id="123214-PERMA_0381"/>
<dbReference type="KEGG" id="pmx:PERMA_0381"/>
<dbReference type="eggNOG" id="COG1968">
    <property type="taxonomic scope" value="Bacteria"/>
</dbReference>
<dbReference type="HOGENOM" id="CLU_060296_2_0_0"/>
<dbReference type="OrthoDB" id="9808289at2"/>
<dbReference type="Proteomes" id="UP000001366">
    <property type="component" value="Chromosome"/>
</dbReference>
<dbReference type="GO" id="GO:0005886">
    <property type="term" value="C:plasma membrane"/>
    <property type="evidence" value="ECO:0007669"/>
    <property type="project" value="UniProtKB-SubCell"/>
</dbReference>
<dbReference type="GO" id="GO:0050380">
    <property type="term" value="F:undecaprenyl-diphosphatase activity"/>
    <property type="evidence" value="ECO:0007669"/>
    <property type="project" value="UniProtKB-UniRule"/>
</dbReference>
<dbReference type="GO" id="GO:0071555">
    <property type="term" value="P:cell wall organization"/>
    <property type="evidence" value="ECO:0007669"/>
    <property type="project" value="UniProtKB-KW"/>
</dbReference>
<dbReference type="GO" id="GO:0009252">
    <property type="term" value="P:peptidoglycan biosynthetic process"/>
    <property type="evidence" value="ECO:0007669"/>
    <property type="project" value="UniProtKB-KW"/>
</dbReference>
<dbReference type="GO" id="GO:0008360">
    <property type="term" value="P:regulation of cell shape"/>
    <property type="evidence" value="ECO:0007669"/>
    <property type="project" value="UniProtKB-KW"/>
</dbReference>
<dbReference type="GO" id="GO:0046677">
    <property type="term" value="P:response to antibiotic"/>
    <property type="evidence" value="ECO:0007669"/>
    <property type="project" value="UniProtKB-UniRule"/>
</dbReference>
<dbReference type="HAMAP" id="MF_01006">
    <property type="entry name" value="Undec_diphosphatase"/>
    <property type="match status" value="1"/>
</dbReference>
<dbReference type="InterPro" id="IPR003824">
    <property type="entry name" value="UppP"/>
</dbReference>
<dbReference type="NCBIfam" id="NF001389">
    <property type="entry name" value="PRK00281.1-2"/>
    <property type="match status" value="1"/>
</dbReference>
<dbReference type="NCBIfam" id="NF001390">
    <property type="entry name" value="PRK00281.1-4"/>
    <property type="match status" value="1"/>
</dbReference>
<dbReference type="NCBIfam" id="TIGR00753">
    <property type="entry name" value="undec_PP_bacA"/>
    <property type="match status" value="1"/>
</dbReference>
<dbReference type="PANTHER" id="PTHR30622">
    <property type="entry name" value="UNDECAPRENYL-DIPHOSPHATASE"/>
    <property type="match status" value="1"/>
</dbReference>
<dbReference type="PANTHER" id="PTHR30622:SF3">
    <property type="entry name" value="UNDECAPRENYL-DIPHOSPHATASE"/>
    <property type="match status" value="1"/>
</dbReference>
<dbReference type="Pfam" id="PF02673">
    <property type="entry name" value="BacA"/>
    <property type="match status" value="1"/>
</dbReference>
<gene>
    <name evidence="1" type="primary">uppP</name>
    <name type="ordered locus">PERMA_0381</name>
</gene>
<keyword id="KW-0046">Antibiotic resistance</keyword>
<keyword id="KW-0997">Cell inner membrane</keyword>
<keyword id="KW-1003">Cell membrane</keyword>
<keyword id="KW-0133">Cell shape</keyword>
<keyword id="KW-0961">Cell wall biogenesis/degradation</keyword>
<keyword id="KW-0378">Hydrolase</keyword>
<keyword id="KW-0472">Membrane</keyword>
<keyword id="KW-0573">Peptidoglycan synthesis</keyword>
<keyword id="KW-1185">Reference proteome</keyword>
<keyword id="KW-0812">Transmembrane</keyword>
<keyword id="KW-1133">Transmembrane helix</keyword>
<protein>
    <recommendedName>
        <fullName evidence="1">Undecaprenyl-diphosphatase</fullName>
        <ecNumber evidence="1">3.6.1.27</ecNumber>
    </recommendedName>
    <alternativeName>
        <fullName evidence="1">Bacitracin resistance protein</fullName>
    </alternativeName>
    <alternativeName>
        <fullName evidence="1">Undecaprenyl pyrophosphate phosphatase</fullName>
    </alternativeName>
</protein>
<feature type="chain" id="PRO_1000148822" description="Undecaprenyl-diphosphatase">
    <location>
        <begin position="1"/>
        <end position="254"/>
    </location>
</feature>
<feature type="transmembrane region" description="Helical" evidence="1">
    <location>
        <begin position="1"/>
        <end position="21"/>
    </location>
</feature>
<feature type="transmembrane region" description="Helical" evidence="1">
    <location>
        <begin position="41"/>
        <end position="61"/>
    </location>
</feature>
<feature type="transmembrane region" description="Helical" evidence="1">
    <location>
        <begin position="75"/>
        <end position="95"/>
    </location>
</feature>
<feature type="transmembrane region" description="Helical" evidence="1">
    <location>
        <begin position="96"/>
        <end position="116"/>
    </location>
</feature>
<feature type="transmembrane region" description="Helical" evidence="1">
    <location>
        <begin position="130"/>
        <end position="150"/>
    </location>
</feature>
<feature type="transmembrane region" description="Helical" evidence="1">
    <location>
        <begin position="174"/>
        <end position="194"/>
    </location>
</feature>
<feature type="transmembrane region" description="Helical" evidence="1">
    <location>
        <begin position="210"/>
        <end position="230"/>
    </location>
</feature>
<feature type="transmembrane region" description="Helical" evidence="1">
    <location>
        <begin position="234"/>
        <end position="254"/>
    </location>
</feature>
<reference key="1">
    <citation type="journal article" date="2009" name="J. Bacteriol.">
        <title>Complete and draft genome sequences of six members of the Aquificales.</title>
        <authorList>
            <person name="Reysenbach A.-L."/>
            <person name="Hamamura N."/>
            <person name="Podar M."/>
            <person name="Griffiths E."/>
            <person name="Ferreira S."/>
            <person name="Hochstein R."/>
            <person name="Heidelberg J."/>
            <person name="Johnson J."/>
            <person name="Mead D."/>
            <person name="Pohorille A."/>
            <person name="Sarmiento M."/>
            <person name="Schweighofer K."/>
            <person name="Seshadri R."/>
            <person name="Voytek M.A."/>
        </authorList>
    </citation>
    <scope>NUCLEOTIDE SEQUENCE [LARGE SCALE GENOMIC DNA]</scope>
    <source>
        <strain>DSM 14350 / EX-H1</strain>
    </source>
</reference>
<name>UPPP_PERMH</name>
<accession>C0QU08</accession>
<proteinExistence type="inferred from homology"/>
<organism>
    <name type="scientific">Persephonella marina (strain DSM 14350 / EX-H1)</name>
    <dbReference type="NCBI Taxonomy" id="123214"/>
    <lineage>
        <taxon>Bacteria</taxon>
        <taxon>Pseudomonadati</taxon>
        <taxon>Aquificota</taxon>
        <taxon>Aquificia</taxon>
        <taxon>Aquificales</taxon>
        <taxon>Hydrogenothermaceae</taxon>
        <taxon>Persephonella</taxon>
    </lineage>
</organism>
<sequence>MGIIESIILGIVEGLTEFLPVSSTGHLILVSKLLGLEQTDAHKAFEVAIQSGAILAVVFLYREKLTHSIDLWKRLIIAFIPTGILGFLLYKIIKGLFSPYIVSIMLIVGGLVFIAVEFFYKKSEHQIDDILKIPYYKAFFIGVFQSIAMIPGTSRSGATIIGGLLLGLDRKTAAEFSFLLAVPTMFAATSYDIMKNYHHFHIENWIALLTGFVTAFVFAVLAIKLFIGFVSRYNFVPFGIYRIILGFIFLLFVL</sequence>
<comment type="function">
    <text evidence="1">Catalyzes the dephosphorylation of undecaprenyl diphosphate (UPP). Confers resistance to bacitracin.</text>
</comment>
<comment type="catalytic activity">
    <reaction evidence="1">
        <text>di-trans,octa-cis-undecaprenyl diphosphate + H2O = di-trans,octa-cis-undecaprenyl phosphate + phosphate + H(+)</text>
        <dbReference type="Rhea" id="RHEA:28094"/>
        <dbReference type="ChEBI" id="CHEBI:15377"/>
        <dbReference type="ChEBI" id="CHEBI:15378"/>
        <dbReference type="ChEBI" id="CHEBI:43474"/>
        <dbReference type="ChEBI" id="CHEBI:58405"/>
        <dbReference type="ChEBI" id="CHEBI:60392"/>
        <dbReference type="EC" id="3.6.1.27"/>
    </reaction>
</comment>
<comment type="subcellular location">
    <subcellularLocation>
        <location evidence="1">Cell inner membrane</location>
        <topology evidence="1">Multi-pass membrane protein</topology>
    </subcellularLocation>
</comment>
<comment type="miscellaneous">
    <text>Bacitracin is thought to be involved in the inhibition of peptidoglycan synthesis by sequestering undecaprenyl diphosphate, thereby reducing the pool of lipid carrier available.</text>
</comment>
<comment type="similarity">
    <text evidence="1">Belongs to the UppP family.</text>
</comment>
<evidence type="ECO:0000255" key="1">
    <source>
        <dbReference type="HAMAP-Rule" id="MF_01006"/>
    </source>
</evidence>